<accession>Q2NWI4</accession>
<dbReference type="EMBL" id="AP008232">
    <property type="protein sequence ID" value="BAE73491.1"/>
    <property type="molecule type" value="Genomic_DNA"/>
</dbReference>
<dbReference type="RefSeq" id="WP_011410080.1">
    <property type="nucleotide sequence ID" value="NZ_LN854557.1"/>
</dbReference>
<dbReference type="SMR" id="Q2NWI4"/>
<dbReference type="STRING" id="343509.SG0216"/>
<dbReference type="KEGG" id="sgl:SG0216"/>
<dbReference type="eggNOG" id="COG0102">
    <property type="taxonomic scope" value="Bacteria"/>
</dbReference>
<dbReference type="HOGENOM" id="CLU_082184_2_2_6"/>
<dbReference type="OrthoDB" id="9801330at2"/>
<dbReference type="Proteomes" id="UP000001932">
    <property type="component" value="Chromosome"/>
</dbReference>
<dbReference type="GO" id="GO:0022625">
    <property type="term" value="C:cytosolic large ribosomal subunit"/>
    <property type="evidence" value="ECO:0007669"/>
    <property type="project" value="TreeGrafter"/>
</dbReference>
<dbReference type="GO" id="GO:0003729">
    <property type="term" value="F:mRNA binding"/>
    <property type="evidence" value="ECO:0007669"/>
    <property type="project" value="TreeGrafter"/>
</dbReference>
<dbReference type="GO" id="GO:0003735">
    <property type="term" value="F:structural constituent of ribosome"/>
    <property type="evidence" value="ECO:0007669"/>
    <property type="project" value="InterPro"/>
</dbReference>
<dbReference type="GO" id="GO:0017148">
    <property type="term" value="P:negative regulation of translation"/>
    <property type="evidence" value="ECO:0007669"/>
    <property type="project" value="TreeGrafter"/>
</dbReference>
<dbReference type="GO" id="GO:0006412">
    <property type="term" value="P:translation"/>
    <property type="evidence" value="ECO:0007669"/>
    <property type="project" value="UniProtKB-UniRule"/>
</dbReference>
<dbReference type="CDD" id="cd00392">
    <property type="entry name" value="Ribosomal_L13"/>
    <property type="match status" value="1"/>
</dbReference>
<dbReference type="FunFam" id="3.90.1180.10:FF:000001">
    <property type="entry name" value="50S ribosomal protein L13"/>
    <property type="match status" value="1"/>
</dbReference>
<dbReference type="Gene3D" id="3.90.1180.10">
    <property type="entry name" value="Ribosomal protein L13"/>
    <property type="match status" value="1"/>
</dbReference>
<dbReference type="HAMAP" id="MF_01366">
    <property type="entry name" value="Ribosomal_uL13"/>
    <property type="match status" value="1"/>
</dbReference>
<dbReference type="InterPro" id="IPR005822">
    <property type="entry name" value="Ribosomal_uL13"/>
</dbReference>
<dbReference type="InterPro" id="IPR005823">
    <property type="entry name" value="Ribosomal_uL13_bac-type"/>
</dbReference>
<dbReference type="InterPro" id="IPR023563">
    <property type="entry name" value="Ribosomal_uL13_CS"/>
</dbReference>
<dbReference type="InterPro" id="IPR036899">
    <property type="entry name" value="Ribosomal_uL13_sf"/>
</dbReference>
<dbReference type="NCBIfam" id="TIGR01066">
    <property type="entry name" value="rplM_bact"/>
    <property type="match status" value="1"/>
</dbReference>
<dbReference type="PANTHER" id="PTHR11545:SF2">
    <property type="entry name" value="LARGE RIBOSOMAL SUBUNIT PROTEIN UL13M"/>
    <property type="match status" value="1"/>
</dbReference>
<dbReference type="PANTHER" id="PTHR11545">
    <property type="entry name" value="RIBOSOMAL PROTEIN L13"/>
    <property type="match status" value="1"/>
</dbReference>
<dbReference type="Pfam" id="PF00572">
    <property type="entry name" value="Ribosomal_L13"/>
    <property type="match status" value="1"/>
</dbReference>
<dbReference type="PIRSF" id="PIRSF002181">
    <property type="entry name" value="Ribosomal_L13"/>
    <property type="match status" value="1"/>
</dbReference>
<dbReference type="SUPFAM" id="SSF52161">
    <property type="entry name" value="Ribosomal protein L13"/>
    <property type="match status" value="1"/>
</dbReference>
<dbReference type="PROSITE" id="PS00783">
    <property type="entry name" value="RIBOSOMAL_L13"/>
    <property type="match status" value="1"/>
</dbReference>
<comment type="function">
    <text evidence="1">This protein is one of the early assembly proteins of the 50S ribosomal subunit, although it is not seen to bind rRNA by itself. It is important during the early stages of 50S assembly.</text>
</comment>
<comment type="subunit">
    <text evidence="1">Part of the 50S ribosomal subunit.</text>
</comment>
<comment type="similarity">
    <text evidence="1">Belongs to the universal ribosomal protein uL13 family.</text>
</comment>
<sequence>MKTFTAKPETVKRDWYVVDAEGKTLGRLATELARRLRGKHKAEYTPHVDTGDYLIVLNADKVAVTGNKRNDKIYYHYTGHVGGIKQATFEEMIARRPERVIEIAVKGMLPKGPLGRAMFRKLKVYAGTEHNHAAQQPQVLDI</sequence>
<evidence type="ECO:0000255" key="1">
    <source>
        <dbReference type="HAMAP-Rule" id="MF_01366"/>
    </source>
</evidence>
<evidence type="ECO:0000305" key="2"/>
<organism>
    <name type="scientific">Sodalis glossinidius (strain morsitans)</name>
    <dbReference type="NCBI Taxonomy" id="343509"/>
    <lineage>
        <taxon>Bacteria</taxon>
        <taxon>Pseudomonadati</taxon>
        <taxon>Pseudomonadota</taxon>
        <taxon>Gammaproteobacteria</taxon>
        <taxon>Enterobacterales</taxon>
        <taxon>Bruguierivoracaceae</taxon>
        <taxon>Sodalis</taxon>
    </lineage>
</organism>
<gene>
    <name evidence="1" type="primary">rplM</name>
    <name type="ordered locus">SG0216</name>
</gene>
<reference key="1">
    <citation type="journal article" date="2006" name="Genome Res.">
        <title>Massive genome erosion and functional adaptations provide insights into the symbiotic lifestyle of Sodalis glossinidius in the tsetse host.</title>
        <authorList>
            <person name="Toh H."/>
            <person name="Weiss B.L."/>
            <person name="Perkin S.A.H."/>
            <person name="Yamashita A."/>
            <person name="Oshima K."/>
            <person name="Hattori M."/>
            <person name="Aksoy S."/>
        </authorList>
    </citation>
    <scope>NUCLEOTIDE SEQUENCE [LARGE SCALE GENOMIC DNA]</scope>
    <source>
        <strain>morsitans</strain>
    </source>
</reference>
<feature type="chain" id="PRO_0000261802" description="Large ribosomal subunit protein uL13">
    <location>
        <begin position="1"/>
        <end position="142"/>
    </location>
</feature>
<name>RL13_SODGM</name>
<keyword id="KW-0687">Ribonucleoprotein</keyword>
<keyword id="KW-0689">Ribosomal protein</keyword>
<protein>
    <recommendedName>
        <fullName evidence="1">Large ribosomal subunit protein uL13</fullName>
    </recommendedName>
    <alternativeName>
        <fullName evidence="2">50S ribosomal protein L13</fullName>
    </alternativeName>
</protein>
<proteinExistence type="inferred from homology"/>